<dbReference type="EC" id="3.2.1.-"/>
<dbReference type="EMBL" id="AK008791">
    <property type="protein sequence ID" value="BAB25896.1"/>
    <property type="molecule type" value="mRNA"/>
</dbReference>
<dbReference type="EMBL" id="AC124987">
    <property type="status" value="NOT_ANNOTATED_CDS"/>
    <property type="molecule type" value="Genomic_DNA"/>
</dbReference>
<dbReference type="EMBL" id="BC022594">
    <property type="protein sequence ID" value="AAH22594.1"/>
    <property type="molecule type" value="mRNA"/>
</dbReference>
<dbReference type="CCDS" id="CCDS17902.1">
    <molecule id="Q8R242-2"/>
</dbReference>
<dbReference type="CCDS" id="CCDS80048.1">
    <molecule id="Q8R242-1"/>
</dbReference>
<dbReference type="RefSeq" id="NP_001280601.1">
    <molecule id="Q8R242-1"/>
    <property type="nucleotide sequence ID" value="NM_001293672.2"/>
</dbReference>
<dbReference type="RefSeq" id="NP_083112.1">
    <molecule id="Q8R242-2"/>
    <property type="nucleotide sequence ID" value="NM_028836.5"/>
</dbReference>
<dbReference type="SMR" id="Q8R242"/>
<dbReference type="FunCoup" id="Q8R242">
    <property type="interactions" value="115"/>
</dbReference>
<dbReference type="STRING" id="10090.ENSMUSP00000059167"/>
<dbReference type="CAZy" id="GH18">
    <property type="family name" value="Glycoside Hydrolase Family 18"/>
</dbReference>
<dbReference type="GlyCosmos" id="Q8R242">
    <property type="glycosylation" value="5 sites, No reported glycans"/>
</dbReference>
<dbReference type="GlyGen" id="Q8R242">
    <property type="glycosylation" value="6 sites, 1 N-linked glycan (1 site), 1 O-linked glycan (1 site)"/>
</dbReference>
<dbReference type="PhosphoSitePlus" id="Q8R242"/>
<dbReference type="CPTAC" id="non-CPTAC-3571"/>
<dbReference type="PeptideAtlas" id="Q8R242"/>
<dbReference type="ProteomicsDB" id="279690">
    <molecule id="Q8R242-1"/>
</dbReference>
<dbReference type="ProteomicsDB" id="279691">
    <molecule id="Q8R242-2"/>
</dbReference>
<dbReference type="Pumba" id="Q8R242"/>
<dbReference type="Antibodypedia" id="4472">
    <property type="antibodies" value="163 antibodies from 26 providers"/>
</dbReference>
<dbReference type="DNASU" id="74245"/>
<dbReference type="Ensembl" id="ENSMUST00000029840.4">
    <molecule id="Q8R242-2"/>
    <property type="protein sequence ID" value="ENSMUSP00000029840.4"/>
    <property type="gene ID" value="ENSMUSG00000028189.13"/>
</dbReference>
<dbReference type="Ensembl" id="ENSMUST00000061937.13">
    <molecule id="Q8R242-1"/>
    <property type="protein sequence ID" value="ENSMUSP00000059167.7"/>
    <property type="gene ID" value="ENSMUSG00000028189.13"/>
</dbReference>
<dbReference type="GeneID" id="74245"/>
<dbReference type="KEGG" id="mmu:74245"/>
<dbReference type="UCSC" id="uc008rrg.2">
    <molecule id="Q8R242-2"/>
    <property type="organism name" value="mouse"/>
</dbReference>
<dbReference type="UCSC" id="uc008rrh.2">
    <molecule id="Q8R242-1"/>
    <property type="organism name" value="mouse"/>
</dbReference>
<dbReference type="AGR" id="MGI:1921495"/>
<dbReference type="CTD" id="1486"/>
<dbReference type="MGI" id="MGI:1921495">
    <property type="gene designation" value="Ctbs"/>
</dbReference>
<dbReference type="VEuPathDB" id="HostDB:ENSMUSG00000028189"/>
<dbReference type="GeneTree" id="ENSGT00390000012891"/>
<dbReference type="HOGENOM" id="CLU_061189_1_0_1"/>
<dbReference type="InParanoid" id="Q8R242"/>
<dbReference type="OMA" id="KWIMKQV"/>
<dbReference type="OrthoDB" id="73875at2759"/>
<dbReference type="PhylomeDB" id="Q8R242"/>
<dbReference type="TreeFam" id="TF332677"/>
<dbReference type="BioGRID-ORCS" id="74245">
    <property type="hits" value="0 hits in 78 CRISPR screens"/>
</dbReference>
<dbReference type="PRO" id="PR:Q8R242"/>
<dbReference type="Proteomes" id="UP000000589">
    <property type="component" value="Chromosome 3"/>
</dbReference>
<dbReference type="RNAct" id="Q8R242">
    <property type="molecule type" value="protein"/>
</dbReference>
<dbReference type="Bgee" id="ENSMUSG00000028189">
    <property type="expression patterns" value="Expressed in proximal tubule and 202 other cell types or tissues"/>
</dbReference>
<dbReference type="ExpressionAtlas" id="Q8R242">
    <property type="expression patterns" value="baseline and differential"/>
</dbReference>
<dbReference type="GO" id="GO:0005764">
    <property type="term" value="C:lysosome"/>
    <property type="evidence" value="ECO:0007669"/>
    <property type="project" value="UniProtKB-SubCell"/>
</dbReference>
<dbReference type="GO" id="GO:0008061">
    <property type="term" value="F:chitin binding"/>
    <property type="evidence" value="ECO:0007669"/>
    <property type="project" value="InterPro"/>
</dbReference>
<dbReference type="GO" id="GO:0004568">
    <property type="term" value="F:chitinase activity"/>
    <property type="evidence" value="ECO:0007669"/>
    <property type="project" value="Ensembl"/>
</dbReference>
<dbReference type="GO" id="GO:0006032">
    <property type="term" value="P:chitin catabolic process"/>
    <property type="evidence" value="ECO:0007669"/>
    <property type="project" value="Ensembl"/>
</dbReference>
<dbReference type="GO" id="GO:0009313">
    <property type="term" value="P:oligosaccharide catabolic process"/>
    <property type="evidence" value="ECO:0007669"/>
    <property type="project" value="Ensembl"/>
</dbReference>
<dbReference type="CDD" id="cd02875">
    <property type="entry name" value="GH18_chitobiase"/>
    <property type="match status" value="1"/>
</dbReference>
<dbReference type="FunFam" id="3.10.50.10:FF:000006">
    <property type="entry name" value="Chitobiase, di-N-acetyl"/>
    <property type="match status" value="1"/>
</dbReference>
<dbReference type="FunFam" id="3.20.20.80:FF:000250">
    <property type="entry name" value="Probable di-N-acetylchitobiase 1"/>
    <property type="match status" value="1"/>
</dbReference>
<dbReference type="Gene3D" id="3.10.50.10">
    <property type="match status" value="1"/>
</dbReference>
<dbReference type="Gene3D" id="3.20.20.80">
    <property type="entry name" value="Glycosidases"/>
    <property type="match status" value="1"/>
</dbReference>
<dbReference type="InterPro" id="IPR011583">
    <property type="entry name" value="Chitinase_II/V-like_cat"/>
</dbReference>
<dbReference type="InterPro" id="IPR029070">
    <property type="entry name" value="Chitinase_insertion_sf"/>
</dbReference>
<dbReference type="InterPro" id="IPR047898">
    <property type="entry name" value="DIAC_cat"/>
</dbReference>
<dbReference type="InterPro" id="IPR051887">
    <property type="entry name" value="GH18_Domain-Containing"/>
</dbReference>
<dbReference type="InterPro" id="IPR001223">
    <property type="entry name" value="Glyco_hydro18_cat"/>
</dbReference>
<dbReference type="InterPro" id="IPR001579">
    <property type="entry name" value="Glyco_hydro_18_chit_AS"/>
</dbReference>
<dbReference type="InterPro" id="IPR017853">
    <property type="entry name" value="Glycoside_hydrolase_SF"/>
</dbReference>
<dbReference type="PANTHER" id="PTHR46290">
    <property type="entry name" value="DI-N-ACETYLCHITOBIASE"/>
    <property type="match status" value="1"/>
</dbReference>
<dbReference type="PANTHER" id="PTHR46290:SF1">
    <property type="entry name" value="DI-N-ACETYLCHITOBIASE"/>
    <property type="match status" value="1"/>
</dbReference>
<dbReference type="Pfam" id="PF00704">
    <property type="entry name" value="Glyco_hydro_18"/>
    <property type="match status" value="1"/>
</dbReference>
<dbReference type="SMART" id="SM00636">
    <property type="entry name" value="Glyco_18"/>
    <property type="match status" value="1"/>
</dbReference>
<dbReference type="SUPFAM" id="SSF51445">
    <property type="entry name" value="(Trans)glycosidases"/>
    <property type="match status" value="1"/>
</dbReference>
<dbReference type="PROSITE" id="PS01095">
    <property type="entry name" value="GH18_1"/>
    <property type="match status" value="1"/>
</dbReference>
<dbReference type="PROSITE" id="PS51910">
    <property type="entry name" value="GH18_2"/>
    <property type="match status" value="1"/>
</dbReference>
<keyword id="KW-0025">Alternative splicing</keyword>
<keyword id="KW-0325">Glycoprotein</keyword>
<keyword id="KW-0326">Glycosidase</keyword>
<keyword id="KW-0378">Hydrolase</keyword>
<keyword id="KW-0458">Lysosome</keyword>
<keyword id="KW-1185">Reference proteome</keyword>
<keyword id="KW-0732">Signal</keyword>
<organism>
    <name type="scientific">Mus musculus</name>
    <name type="common">Mouse</name>
    <dbReference type="NCBI Taxonomy" id="10090"/>
    <lineage>
        <taxon>Eukaryota</taxon>
        <taxon>Metazoa</taxon>
        <taxon>Chordata</taxon>
        <taxon>Craniata</taxon>
        <taxon>Vertebrata</taxon>
        <taxon>Euteleostomi</taxon>
        <taxon>Mammalia</taxon>
        <taxon>Eutheria</taxon>
        <taxon>Euarchontoglires</taxon>
        <taxon>Glires</taxon>
        <taxon>Rodentia</taxon>
        <taxon>Myomorpha</taxon>
        <taxon>Muroidea</taxon>
        <taxon>Muridae</taxon>
        <taxon>Murinae</taxon>
        <taxon>Mus</taxon>
        <taxon>Mus</taxon>
    </lineage>
</organism>
<feature type="signal peptide" evidence="1">
    <location>
        <begin position="1"/>
        <end position="22"/>
    </location>
</feature>
<feature type="chain" id="PRO_0000011962" description="Di-N-acetylchitobiase">
    <location>
        <begin position="23"/>
        <end position="366"/>
    </location>
</feature>
<feature type="domain" description="GH18" evidence="3">
    <location>
        <begin position="23"/>
        <end position="366"/>
    </location>
</feature>
<feature type="active site" description="Proton donor" evidence="3">
    <location>
        <position position="127"/>
    </location>
</feature>
<feature type="glycosylation site" description="N-linked (GlcNAc...) asparagine" evidence="2">
    <location>
        <position position="131"/>
    </location>
</feature>
<feature type="glycosylation site" description="N-linked (GlcNAc...) asparagine" evidence="2">
    <location>
        <position position="177"/>
    </location>
</feature>
<feature type="glycosylation site" description="N-linked (GlcNAc...) asparagine" evidence="2">
    <location>
        <position position="212"/>
    </location>
</feature>
<feature type="glycosylation site" description="N-linked (GlcNAc...) asparagine" evidence="2">
    <location>
        <position position="246"/>
    </location>
</feature>
<feature type="glycosylation site" description="N-linked (GlcNAc...) asparagine" evidence="2">
    <location>
        <position position="283"/>
    </location>
</feature>
<feature type="splice variant" id="VSP_013909" description="In isoform 2." evidence="4">
    <location>
        <begin position="251"/>
        <end position="304"/>
    </location>
</feature>
<name>DIAC_MOUSE</name>
<sequence>MALCGLPEFTLLLLPLLARLSAGDCPCSEAALCQPIRHRPDFEVFVFDVGQKTWKSYDWSQITTVAAFGKYDPELMCYAHSKGARVVLKGDISLKNIIDPTFRASWIAQKVDLAKAQYMDGINIDIEQEVNCSSPEYEALTALVKETTESFQREIEGSQVTFDVAWSPKRIDKRCYNYTGIADACDFLFVMSYDEQSQIWSECIAAANAPYNQTLTGYIDYIKMGISPKKLVMGVPWYGYDYICLNLSKDDICTITKVPFRGAPCSDAAGHQVPYKVIMKQVNGSVSGSQWNKDQQAPYYNYKDPAGRFHQVWYDNPQSISLKAAYVKNYGLRGIGMWNANCLDYSDDALAREQTQEMWGALKPRL</sequence>
<reference key="1">
    <citation type="journal article" date="2005" name="Science">
        <title>The transcriptional landscape of the mammalian genome.</title>
        <authorList>
            <person name="Carninci P."/>
            <person name="Kasukawa T."/>
            <person name="Katayama S."/>
            <person name="Gough J."/>
            <person name="Frith M.C."/>
            <person name="Maeda N."/>
            <person name="Oyama R."/>
            <person name="Ravasi T."/>
            <person name="Lenhard B."/>
            <person name="Wells C."/>
            <person name="Kodzius R."/>
            <person name="Shimokawa K."/>
            <person name="Bajic V.B."/>
            <person name="Brenner S.E."/>
            <person name="Batalov S."/>
            <person name="Forrest A.R."/>
            <person name="Zavolan M."/>
            <person name="Davis M.J."/>
            <person name="Wilming L.G."/>
            <person name="Aidinis V."/>
            <person name="Allen J.E."/>
            <person name="Ambesi-Impiombato A."/>
            <person name="Apweiler R."/>
            <person name="Aturaliya R.N."/>
            <person name="Bailey T.L."/>
            <person name="Bansal M."/>
            <person name="Baxter L."/>
            <person name="Beisel K.W."/>
            <person name="Bersano T."/>
            <person name="Bono H."/>
            <person name="Chalk A.M."/>
            <person name="Chiu K.P."/>
            <person name="Choudhary V."/>
            <person name="Christoffels A."/>
            <person name="Clutterbuck D.R."/>
            <person name="Crowe M.L."/>
            <person name="Dalla E."/>
            <person name="Dalrymple B.P."/>
            <person name="de Bono B."/>
            <person name="Della Gatta G."/>
            <person name="di Bernardo D."/>
            <person name="Down T."/>
            <person name="Engstrom P."/>
            <person name="Fagiolini M."/>
            <person name="Faulkner G."/>
            <person name="Fletcher C.F."/>
            <person name="Fukushima T."/>
            <person name="Furuno M."/>
            <person name="Futaki S."/>
            <person name="Gariboldi M."/>
            <person name="Georgii-Hemming P."/>
            <person name="Gingeras T.R."/>
            <person name="Gojobori T."/>
            <person name="Green R.E."/>
            <person name="Gustincich S."/>
            <person name="Harbers M."/>
            <person name="Hayashi Y."/>
            <person name="Hensch T.K."/>
            <person name="Hirokawa N."/>
            <person name="Hill D."/>
            <person name="Huminiecki L."/>
            <person name="Iacono M."/>
            <person name="Ikeo K."/>
            <person name="Iwama A."/>
            <person name="Ishikawa T."/>
            <person name="Jakt M."/>
            <person name="Kanapin A."/>
            <person name="Katoh M."/>
            <person name="Kawasawa Y."/>
            <person name="Kelso J."/>
            <person name="Kitamura H."/>
            <person name="Kitano H."/>
            <person name="Kollias G."/>
            <person name="Krishnan S.P."/>
            <person name="Kruger A."/>
            <person name="Kummerfeld S.K."/>
            <person name="Kurochkin I.V."/>
            <person name="Lareau L.F."/>
            <person name="Lazarevic D."/>
            <person name="Lipovich L."/>
            <person name="Liu J."/>
            <person name="Liuni S."/>
            <person name="McWilliam S."/>
            <person name="Madan Babu M."/>
            <person name="Madera M."/>
            <person name="Marchionni L."/>
            <person name="Matsuda H."/>
            <person name="Matsuzawa S."/>
            <person name="Miki H."/>
            <person name="Mignone F."/>
            <person name="Miyake S."/>
            <person name="Morris K."/>
            <person name="Mottagui-Tabar S."/>
            <person name="Mulder N."/>
            <person name="Nakano N."/>
            <person name="Nakauchi H."/>
            <person name="Ng P."/>
            <person name="Nilsson R."/>
            <person name="Nishiguchi S."/>
            <person name="Nishikawa S."/>
            <person name="Nori F."/>
            <person name="Ohara O."/>
            <person name="Okazaki Y."/>
            <person name="Orlando V."/>
            <person name="Pang K.C."/>
            <person name="Pavan W.J."/>
            <person name="Pavesi G."/>
            <person name="Pesole G."/>
            <person name="Petrovsky N."/>
            <person name="Piazza S."/>
            <person name="Reed J."/>
            <person name="Reid J.F."/>
            <person name="Ring B.Z."/>
            <person name="Ringwald M."/>
            <person name="Rost B."/>
            <person name="Ruan Y."/>
            <person name="Salzberg S.L."/>
            <person name="Sandelin A."/>
            <person name="Schneider C."/>
            <person name="Schoenbach C."/>
            <person name="Sekiguchi K."/>
            <person name="Semple C.A."/>
            <person name="Seno S."/>
            <person name="Sessa L."/>
            <person name="Sheng Y."/>
            <person name="Shibata Y."/>
            <person name="Shimada H."/>
            <person name="Shimada K."/>
            <person name="Silva D."/>
            <person name="Sinclair B."/>
            <person name="Sperling S."/>
            <person name="Stupka E."/>
            <person name="Sugiura K."/>
            <person name="Sultana R."/>
            <person name="Takenaka Y."/>
            <person name="Taki K."/>
            <person name="Tammoja K."/>
            <person name="Tan S.L."/>
            <person name="Tang S."/>
            <person name="Taylor M.S."/>
            <person name="Tegner J."/>
            <person name="Teichmann S.A."/>
            <person name="Ueda H.R."/>
            <person name="van Nimwegen E."/>
            <person name="Verardo R."/>
            <person name="Wei C.L."/>
            <person name="Yagi K."/>
            <person name="Yamanishi H."/>
            <person name="Zabarovsky E."/>
            <person name="Zhu S."/>
            <person name="Zimmer A."/>
            <person name="Hide W."/>
            <person name="Bult C."/>
            <person name="Grimmond S.M."/>
            <person name="Teasdale R.D."/>
            <person name="Liu E.T."/>
            <person name="Brusic V."/>
            <person name="Quackenbush J."/>
            <person name="Wahlestedt C."/>
            <person name="Mattick J.S."/>
            <person name="Hume D.A."/>
            <person name="Kai C."/>
            <person name="Sasaki D."/>
            <person name="Tomaru Y."/>
            <person name="Fukuda S."/>
            <person name="Kanamori-Katayama M."/>
            <person name="Suzuki M."/>
            <person name="Aoki J."/>
            <person name="Arakawa T."/>
            <person name="Iida J."/>
            <person name="Imamura K."/>
            <person name="Itoh M."/>
            <person name="Kato T."/>
            <person name="Kawaji H."/>
            <person name="Kawagashira N."/>
            <person name="Kawashima T."/>
            <person name="Kojima M."/>
            <person name="Kondo S."/>
            <person name="Konno H."/>
            <person name="Nakano K."/>
            <person name="Ninomiya N."/>
            <person name="Nishio T."/>
            <person name="Okada M."/>
            <person name="Plessy C."/>
            <person name="Shibata K."/>
            <person name="Shiraki T."/>
            <person name="Suzuki S."/>
            <person name="Tagami M."/>
            <person name="Waki K."/>
            <person name="Watahiki A."/>
            <person name="Okamura-Oho Y."/>
            <person name="Suzuki H."/>
            <person name="Kawai J."/>
            <person name="Hayashizaki Y."/>
        </authorList>
    </citation>
    <scope>NUCLEOTIDE SEQUENCE [LARGE SCALE MRNA] (ISOFORM 2)</scope>
    <source>
        <strain>C57BL/6J</strain>
        <tissue>Stomach</tissue>
    </source>
</reference>
<reference key="2">
    <citation type="journal article" date="2009" name="PLoS Biol.">
        <title>Lineage-specific biology revealed by a finished genome assembly of the mouse.</title>
        <authorList>
            <person name="Church D.M."/>
            <person name="Goodstadt L."/>
            <person name="Hillier L.W."/>
            <person name="Zody M.C."/>
            <person name="Goldstein S."/>
            <person name="She X."/>
            <person name="Bult C.J."/>
            <person name="Agarwala R."/>
            <person name="Cherry J.L."/>
            <person name="DiCuccio M."/>
            <person name="Hlavina W."/>
            <person name="Kapustin Y."/>
            <person name="Meric P."/>
            <person name="Maglott D."/>
            <person name="Birtle Z."/>
            <person name="Marques A.C."/>
            <person name="Graves T."/>
            <person name="Zhou S."/>
            <person name="Teague B."/>
            <person name="Potamousis K."/>
            <person name="Churas C."/>
            <person name="Place M."/>
            <person name="Herschleb J."/>
            <person name="Runnheim R."/>
            <person name="Forrest D."/>
            <person name="Amos-Landgraf J."/>
            <person name="Schwartz D.C."/>
            <person name="Cheng Z."/>
            <person name="Lindblad-Toh K."/>
            <person name="Eichler E.E."/>
            <person name="Ponting C.P."/>
        </authorList>
    </citation>
    <scope>NUCLEOTIDE SEQUENCE [LARGE SCALE GENOMIC DNA]</scope>
    <source>
        <strain>C57BL/6J</strain>
    </source>
</reference>
<reference key="3">
    <citation type="journal article" date="2004" name="Genome Res.">
        <title>The status, quality, and expansion of the NIH full-length cDNA project: the Mammalian Gene Collection (MGC).</title>
        <authorList>
            <consortium name="The MGC Project Team"/>
        </authorList>
    </citation>
    <scope>NUCLEOTIDE SEQUENCE [LARGE SCALE MRNA] OF 69-366 (ISOFORM 1)</scope>
    <source>
        <strain>C57BL/6J</strain>
        <strain>FVB/N</strain>
        <tissue>Mammary tumor</tissue>
    </source>
</reference>
<reference key="4">
    <citation type="journal article" date="2010" name="Cell">
        <title>A tissue-specific atlas of mouse protein phosphorylation and expression.</title>
        <authorList>
            <person name="Huttlin E.L."/>
            <person name="Jedrychowski M.P."/>
            <person name="Elias J.E."/>
            <person name="Goswami T."/>
            <person name="Rad R."/>
            <person name="Beausoleil S.A."/>
            <person name="Villen J."/>
            <person name="Haas W."/>
            <person name="Sowa M.E."/>
            <person name="Gygi S.P."/>
        </authorList>
    </citation>
    <scope>IDENTIFICATION BY MASS SPECTROMETRY [LARGE SCALE ANALYSIS]</scope>
    <source>
        <tissue>Kidney</tissue>
    </source>
</reference>
<comment type="function">
    <text evidence="1">Involved in the degradation of asparagine-linked glycoproteins. Hydrolyze of N-acetyl-beta-D-glucosamine (1-4)N-acetylglucosamine chitobiose core from the reducing end of the bond, it requires prior cleavage by glycosylasparaginase (By similarity).</text>
</comment>
<comment type="subcellular location">
    <subcellularLocation>
        <location evidence="1">Lysosome</location>
    </subcellularLocation>
</comment>
<comment type="alternative products">
    <event type="alternative splicing"/>
    <isoform>
        <id>Q8R242-1</id>
        <name>1</name>
        <sequence type="displayed"/>
    </isoform>
    <isoform>
        <id>Q8R242-2</id>
        <name>2</name>
        <sequence type="described" ref="VSP_013909"/>
    </isoform>
</comment>
<comment type="similarity">
    <text evidence="5">Belongs to the glycosyl hydrolase 18 family.</text>
</comment>
<gene>
    <name type="primary">Ctbs</name>
</gene>
<proteinExistence type="evidence at protein level"/>
<evidence type="ECO:0000250" key="1"/>
<evidence type="ECO:0000255" key="2"/>
<evidence type="ECO:0000255" key="3">
    <source>
        <dbReference type="PROSITE-ProRule" id="PRU01258"/>
    </source>
</evidence>
<evidence type="ECO:0000303" key="4">
    <source>
    </source>
</evidence>
<evidence type="ECO:0000305" key="5"/>
<protein>
    <recommendedName>
        <fullName>Di-N-acetylchitobiase</fullName>
        <ecNumber>3.2.1.-</ecNumber>
    </recommendedName>
</protein>
<accession>Q8R242</accession>
<accession>Q9D7V4</accession>